<name>O1661_CONTE</name>
<evidence type="ECO:0000250" key="1"/>
<evidence type="ECO:0000255" key="2"/>
<evidence type="ECO:0000305" key="3"/>
<reference key="1">
    <citation type="journal article" date="2006" name="Peptides">
        <title>Sequence diversity of O-superfamily conopeptides from Conus marmoreus native to Hainan.</title>
        <authorList>
            <person name="Luo S."/>
            <person name="Zhangsun D."/>
            <person name="Lin Q."/>
            <person name="Xie L."/>
            <person name="Wu Y."/>
            <person name="Zhu X."/>
        </authorList>
    </citation>
    <scope>NUCLEOTIDE SEQUENCE [MRNA]</scope>
    <source>
        <tissue>Venom duct</tissue>
    </source>
</reference>
<keyword id="KW-0108">Calcium channel impairing toxin</keyword>
<keyword id="KW-1015">Disulfide bond</keyword>
<keyword id="KW-0872">Ion channel impairing toxin</keyword>
<keyword id="KW-0960">Knottin</keyword>
<keyword id="KW-0528">Neurotoxin</keyword>
<keyword id="KW-0638">Presynaptic neurotoxin</keyword>
<keyword id="KW-0964">Secreted</keyword>
<keyword id="KW-0732">Signal</keyword>
<keyword id="KW-0800">Toxin</keyword>
<keyword id="KW-1218">Voltage-gated calcium channel impairing toxin</keyword>
<sequence>MKLTCMMIVAVLFLTAWTFATADDSSNGLGNLFLKAHHEMKNPEASKLNERCLDAGEVCDIFFPTCCGYCILLFCA</sequence>
<organism>
    <name type="scientific">Conus textile</name>
    <name type="common">Cloth-of-gold cone</name>
    <dbReference type="NCBI Taxonomy" id="6494"/>
    <lineage>
        <taxon>Eukaryota</taxon>
        <taxon>Metazoa</taxon>
        <taxon>Spiralia</taxon>
        <taxon>Lophotrochozoa</taxon>
        <taxon>Mollusca</taxon>
        <taxon>Gastropoda</taxon>
        <taxon>Caenogastropoda</taxon>
        <taxon>Neogastropoda</taxon>
        <taxon>Conoidea</taxon>
        <taxon>Conidae</taxon>
        <taxon>Conus</taxon>
        <taxon>Cylinder</taxon>
    </lineage>
</organism>
<accession>Q3YEF3</accession>
<dbReference type="EMBL" id="DQ141160">
    <property type="protein sequence ID" value="AAZ83761.1"/>
    <property type="molecule type" value="mRNA"/>
</dbReference>
<dbReference type="SMR" id="Q3YEF3"/>
<dbReference type="ConoServer" id="1118">
    <property type="toxin name" value="TxO1 precursor"/>
</dbReference>
<dbReference type="GO" id="GO:0005576">
    <property type="term" value="C:extracellular region"/>
    <property type="evidence" value="ECO:0007669"/>
    <property type="project" value="UniProtKB-SubCell"/>
</dbReference>
<dbReference type="GO" id="GO:0044231">
    <property type="term" value="C:host cell presynaptic membrane"/>
    <property type="evidence" value="ECO:0007669"/>
    <property type="project" value="UniProtKB-KW"/>
</dbReference>
<dbReference type="GO" id="GO:0005246">
    <property type="term" value="F:calcium channel regulator activity"/>
    <property type="evidence" value="ECO:0007669"/>
    <property type="project" value="UniProtKB-KW"/>
</dbReference>
<dbReference type="GO" id="GO:0008200">
    <property type="term" value="F:ion channel inhibitor activity"/>
    <property type="evidence" value="ECO:0007669"/>
    <property type="project" value="InterPro"/>
</dbReference>
<dbReference type="GO" id="GO:0090729">
    <property type="term" value="F:toxin activity"/>
    <property type="evidence" value="ECO:0007669"/>
    <property type="project" value="UniProtKB-KW"/>
</dbReference>
<dbReference type="InterPro" id="IPR004214">
    <property type="entry name" value="Conotoxin"/>
</dbReference>
<dbReference type="InterPro" id="IPR012321">
    <property type="entry name" value="Conotoxin_omega-typ_CS"/>
</dbReference>
<dbReference type="Pfam" id="PF02950">
    <property type="entry name" value="Conotoxin"/>
    <property type="match status" value="1"/>
</dbReference>
<dbReference type="PROSITE" id="PS60004">
    <property type="entry name" value="OMEGA_CONOTOXIN"/>
    <property type="match status" value="1"/>
</dbReference>
<feature type="signal peptide" evidence="2">
    <location>
        <begin position="1"/>
        <end position="22"/>
    </location>
</feature>
<feature type="propeptide" id="PRO_0000315474" evidence="3">
    <location>
        <begin position="23"/>
        <end position="51"/>
    </location>
</feature>
<feature type="peptide" id="PRO_0000315475" description="Omega-conotoxin-like TeA61">
    <location>
        <begin position="52"/>
        <end position="76"/>
    </location>
</feature>
<feature type="disulfide bond" evidence="1">
    <location>
        <begin position="52"/>
        <end position="67"/>
    </location>
</feature>
<feature type="disulfide bond" evidence="1">
    <location>
        <begin position="59"/>
        <end position="70"/>
    </location>
</feature>
<feature type="disulfide bond" evidence="1">
    <location>
        <begin position="66"/>
        <end position="75"/>
    </location>
</feature>
<comment type="function">
    <text evidence="1">Omega-conotoxins act at presynaptic membranes, they bind and block voltage-gated calcium channels (Cav).</text>
</comment>
<comment type="subcellular location">
    <subcellularLocation>
        <location evidence="1">Secreted</location>
    </subcellularLocation>
</comment>
<comment type="tissue specificity">
    <text>Expressed by the venom duct.</text>
</comment>
<comment type="domain">
    <text evidence="1">The presence of a 'disulfide through disulfide knot' structurally defines this protein as a knottin.</text>
</comment>
<comment type="domain">
    <text>The cysteine framework is VI/VII (C-C-CC-C-C).</text>
</comment>
<comment type="similarity">
    <text evidence="3">Belongs to the conotoxin O1 superfamily.</text>
</comment>
<proteinExistence type="evidence at transcript level"/>
<protein>
    <recommendedName>
        <fullName>Omega-conotoxin-like TeA61</fullName>
    </recommendedName>
</protein>